<proteinExistence type="inferred from homology"/>
<organism>
    <name type="scientific">Rhodopirellula baltica (strain DSM 10527 / NCIMB 13988 / SH1)</name>
    <dbReference type="NCBI Taxonomy" id="243090"/>
    <lineage>
        <taxon>Bacteria</taxon>
        <taxon>Pseudomonadati</taxon>
        <taxon>Planctomycetota</taxon>
        <taxon>Planctomycetia</taxon>
        <taxon>Pirellulales</taxon>
        <taxon>Pirellulaceae</taxon>
        <taxon>Rhodopirellula</taxon>
    </lineage>
</organism>
<gene>
    <name evidence="1" type="primary">argS</name>
    <name type="ordered locus">RB5747</name>
</gene>
<evidence type="ECO:0000255" key="1">
    <source>
        <dbReference type="HAMAP-Rule" id="MF_00123"/>
    </source>
</evidence>
<evidence type="ECO:0000256" key="2">
    <source>
        <dbReference type="SAM" id="MobiDB-lite"/>
    </source>
</evidence>
<reference key="1">
    <citation type="journal article" date="2003" name="Proc. Natl. Acad. Sci. U.S.A.">
        <title>Complete genome sequence of the marine planctomycete Pirellula sp. strain 1.</title>
        <authorList>
            <person name="Gloeckner F.O."/>
            <person name="Kube M."/>
            <person name="Bauer M."/>
            <person name="Teeling H."/>
            <person name="Lombardot T."/>
            <person name="Ludwig W."/>
            <person name="Gade D."/>
            <person name="Beck A."/>
            <person name="Borzym K."/>
            <person name="Heitmann K."/>
            <person name="Rabus R."/>
            <person name="Schlesner H."/>
            <person name="Amann R."/>
            <person name="Reinhardt R."/>
        </authorList>
    </citation>
    <scope>NUCLEOTIDE SEQUENCE [LARGE SCALE GENOMIC DNA]</scope>
    <source>
        <strain>DSM 10527 / NCIMB 13988 / SH1</strain>
    </source>
</reference>
<sequence length="671" mass="74409">MHLPNVLQARFVQALEPLTDSPSDYAGMIRPAADPKFGDYQSNAAMPLAKRVGKTSRDVAAELVQNLNVTDLFEEPEVAGPGFINLRLKDSVLFDSIQQMLLDERVGVSKTTDPKKVIVDFSSPNVAKPMHVGHIRSTVIGDCLARTLRFYGEDVVTDNHLGDWGTQFGIIIYGYRNFGDPAKVAANPVPELSALYRLTNQLIEYQKAKQSLATMADKLATAKSDAKTAKEVSDQSESDENLKPKDKKKLRKNAEAATRRVASIEADMKSLKAKIDAVDSDTELSKLASEHSDVDVAVLRETAKLHEGDPENLALWKEFLPHCQDEINRIYDRLNVQFDHTLGESFYHDRLAGVVDHLTTLGLTTKSDGAICVFLEGFDSPMIIQKRDGAFLYATTDLATLQYRRDEFQPDEILYVVDSRQGEHFKKFFAMAEPLGMAEVQLVHVNFGTVLGPDGRPMKTRSGSLIGLESLLNDAVSRAKEVVCNPDRLATMDPPMGGEEQQQIAEIVGIGAIKYADLSHHRTSDYKFDVDKMVALEGNTATYVQYSYARTQSILRRASDGEGLPAFEQAIEQAAATQPMTFTHPNERSLALMLMRFEEAIEQVRLNYAPNALCDYLFETAKTYSSFNESCRVLGNDDPAVMQTRLALVVLTGRVLKKGLSLLGIDVAERM</sequence>
<protein>
    <recommendedName>
        <fullName evidence="1">Arginine--tRNA ligase</fullName>
        <ecNumber evidence="1">6.1.1.19</ecNumber>
    </recommendedName>
    <alternativeName>
        <fullName evidence="1">Arginyl-tRNA synthetase</fullName>
        <shortName evidence="1">ArgRS</shortName>
    </alternativeName>
</protein>
<dbReference type="EC" id="6.1.1.19" evidence="1"/>
<dbReference type="EMBL" id="BX294142">
    <property type="protein sequence ID" value="CAD74413.1"/>
    <property type="molecule type" value="Genomic_DNA"/>
</dbReference>
<dbReference type="RefSeq" id="NP_866872.1">
    <property type="nucleotide sequence ID" value="NC_005027.1"/>
</dbReference>
<dbReference type="RefSeq" id="WP_011120594.1">
    <property type="nucleotide sequence ID" value="NC_005027.1"/>
</dbReference>
<dbReference type="SMR" id="Q7URC7"/>
<dbReference type="FunCoup" id="Q7URC7">
    <property type="interactions" value="495"/>
</dbReference>
<dbReference type="STRING" id="243090.RB5747"/>
<dbReference type="EnsemblBacteria" id="CAD74413">
    <property type="protein sequence ID" value="CAD74413"/>
    <property type="gene ID" value="RB5747"/>
</dbReference>
<dbReference type="KEGG" id="rba:RB5747"/>
<dbReference type="PATRIC" id="fig|243090.15.peg.2764"/>
<dbReference type="eggNOG" id="COG0018">
    <property type="taxonomic scope" value="Bacteria"/>
</dbReference>
<dbReference type="HOGENOM" id="CLU_006406_5_1_0"/>
<dbReference type="InParanoid" id="Q7URC7"/>
<dbReference type="OrthoDB" id="9805987at2"/>
<dbReference type="Proteomes" id="UP000001025">
    <property type="component" value="Chromosome"/>
</dbReference>
<dbReference type="GO" id="GO:0005737">
    <property type="term" value="C:cytoplasm"/>
    <property type="evidence" value="ECO:0007669"/>
    <property type="project" value="UniProtKB-SubCell"/>
</dbReference>
<dbReference type="GO" id="GO:0004814">
    <property type="term" value="F:arginine-tRNA ligase activity"/>
    <property type="evidence" value="ECO:0000318"/>
    <property type="project" value="GO_Central"/>
</dbReference>
<dbReference type="GO" id="GO:0005524">
    <property type="term" value="F:ATP binding"/>
    <property type="evidence" value="ECO:0007669"/>
    <property type="project" value="UniProtKB-UniRule"/>
</dbReference>
<dbReference type="GO" id="GO:0006420">
    <property type="term" value="P:arginyl-tRNA aminoacylation"/>
    <property type="evidence" value="ECO:0000318"/>
    <property type="project" value="GO_Central"/>
</dbReference>
<dbReference type="CDD" id="cd07956">
    <property type="entry name" value="Anticodon_Ia_Arg"/>
    <property type="match status" value="1"/>
</dbReference>
<dbReference type="CDD" id="cd00671">
    <property type="entry name" value="ArgRS_core"/>
    <property type="match status" value="1"/>
</dbReference>
<dbReference type="FunFam" id="1.10.730.10:FF:000008">
    <property type="entry name" value="Arginine--tRNA ligase"/>
    <property type="match status" value="1"/>
</dbReference>
<dbReference type="Gene3D" id="3.30.1360.70">
    <property type="entry name" value="Arginyl tRNA synthetase N-terminal domain"/>
    <property type="match status" value="1"/>
</dbReference>
<dbReference type="Gene3D" id="3.40.50.620">
    <property type="entry name" value="HUPs"/>
    <property type="match status" value="1"/>
</dbReference>
<dbReference type="Gene3D" id="1.10.730.10">
    <property type="entry name" value="Isoleucyl-tRNA Synthetase, Domain 1"/>
    <property type="match status" value="1"/>
</dbReference>
<dbReference type="HAMAP" id="MF_00123">
    <property type="entry name" value="Arg_tRNA_synth"/>
    <property type="match status" value="1"/>
</dbReference>
<dbReference type="InterPro" id="IPR001412">
    <property type="entry name" value="aa-tRNA-synth_I_CS"/>
</dbReference>
<dbReference type="InterPro" id="IPR001278">
    <property type="entry name" value="Arg-tRNA-ligase"/>
</dbReference>
<dbReference type="InterPro" id="IPR005148">
    <property type="entry name" value="Arg-tRNA-synth_N"/>
</dbReference>
<dbReference type="InterPro" id="IPR036695">
    <property type="entry name" value="Arg-tRNA-synth_N_sf"/>
</dbReference>
<dbReference type="InterPro" id="IPR035684">
    <property type="entry name" value="ArgRS_core"/>
</dbReference>
<dbReference type="InterPro" id="IPR008909">
    <property type="entry name" value="DALR_anticod-bd"/>
</dbReference>
<dbReference type="InterPro" id="IPR014729">
    <property type="entry name" value="Rossmann-like_a/b/a_fold"/>
</dbReference>
<dbReference type="InterPro" id="IPR009080">
    <property type="entry name" value="tRNAsynth_Ia_anticodon-bd"/>
</dbReference>
<dbReference type="NCBIfam" id="TIGR00456">
    <property type="entry name" value="argS"/>
    <property type="match status" value="1"/>
</dbReference>
<dbReference type="PANTHER" id="PTHR11956:SF5">
    <property type="entry name" value="ARGININE--TRNA LIGASE, CYTOPLASMIC"/>
    <property type="match status" value="1"/>
</dbReference>
<dbReference type="PANTHER" id="PTHR11956">
    <property type="entry name" value="ARGINYL-TRNA SYNTHETASE"/>
    <property type="match status" value="1"/>
</dbReference>
<dbReference type="Pfam" id="PF03485">
    <property type="entry name" value="Arg_tRNA_synt_N"/>
    <property type="match status" value="1"/>
</dbReference>
<dbReference type="Pfam" id="PF05746">
    <property type="entry name" value="DALR_1"/>
    <property type="match status" value="1"/>
</dbReference>
<dbReference type="Pfam" id="PF00750">
    <property type="entry name" value="tRNA-synt_1d"/>
    <property type="match status" value="2"/>
</dbReference>
<dbReference type="PRINTS" id="PR01038">
    <property type="entry name" value="TRNASYNTHARG"/>
</dbReference>
<dbReference type="SMART" id="SM01016">
    <property type="entry name" value="Arg_tRNA_synt_N"/>
    <property type="match status" value="1"/>
</dbReference>
<dbReference type="SMART" id="SM00836">
    <property type="entry name" value="DALR_1"/>
    <property type="match status" value="1"/>
</dbReference>
<dbReference type="SUPFAM" id="SSF47323">
    <property type="entry name" value="Anticodon-binding domain of a subclass of class I aminoacyl-tRNA synthetases"/>
    <property type="match status" value="1"/>
</dbReference>
<dbReference type="SUPFAM" id="SSF55190">
    <property type="entry name" value="Arginyl-tRNA synthetase (ArgRS), N-terminal 'additional' domain"/>
    <property type="match status" value="1"/>
</dbReference>
<dbReference type="SUPFAM" id="SSF52374">
    <property type="entry name" value="Nucleotidylyl transferase"/>
    <property type="match status" value="1"/>
</dbReference>
<dbReference type="PROSITE" id="PS00178">
    <property type="entry name" value="AA_TRNA_LIGASE_I"/>
    <property type="match status" value="1"/>
</dbReference>
<name>SYR_RHOBA</name>
<feature type="chain" id="PRO_0000151598" description="Arginine--tRNA ligase">
    <location>
        <begin position="1"/>
        <end position="671"/>
    </location>
</feature>
<feature type="region of interest" description="Disordered" evidence="2">
    <location>
        <begin position="223"/>
        <end position="254"/>
    </location>
</feature>
<feature type="short sequence motif" description="'HIGH' region">
    <location>
        <begin position="124"/>
        <end position="134"/>
    </location>
</feature>
<feature type="compositionally biased region" description="Basic and acidic residues" evidence="2">
    <location>
        <begin position="224"/>
        <end position="233"/>
    </location>
</feature>
<accession>Q7URC7</accession>
<comment type="catalytic activity">
    <reaction evidence="1">
        <text>tRNA(Arg) + L-arginine + ATP = L-arginyl-tRNA(Arg) + AMP + diphosphate</text>
        <dbReference type="Rhea" id="RHEA:20301"/>
        <dbReference type="Rhea" id="RHEA-COMP:9658"/>
        <dbReference type="Rhea" id="RHEA-COMP:9673"/>
        <dbReference type="ChEBI" id="CHEBI:30616"/>
        <dbReference type="ChEBI" id="CHEBI:32682"/>
        <dbReference type="ChEBI" id="CHEBI:33019"/>
        <dbReference type="ChEBI" id="CHEBI:78442"/>
        <dbReference type="ChEBI" id="CHEBI:78513"/>
        <dbReference type="ChEBI" id="CHEBI:456215"/>
        <dbReference type="EC" id="6.1.1.19"/>
    </reaction>
</comment>
<comment type="subunit">
    <text evidence="1">Monomer.</text>
</comment>
<comment type="subcellular location">
    <subcellularLocation>
        <location evidence="1">Cytoplasm</location>
    </subcellularLocation>
</comment>
<comment type="similarity">
    <text evidence="1">Belongs to the class-I aminoacyl-tRNA synthetase family.</text>
</comment>
<keyword id="KW-0030">Aminoacyl-tRNA synthetase</keyword>
<keyword id="KW-0067">ATP-binding</keyword>
<keyword id="KW-0963">Cytoplasm</keyword>
<keyword id="KW-0436">Ligase</keyword>
<keyword id="KW-0547">Nucleotide-binding</keyword>
<keyword id="KW-0648">Protein biosynthesis</keyword>
<keyword id="KW-1185">Reference proteome</keyword>